<organism>
    <name type="scientific">Vanderwaltozyma polyspora (strain ATCC 22028 / DSM 70294 / BCRC 21397 / CBS 2163 / NBRC 10782 / NRRL Y-8283 / UCD 57-17)</name>
    <name type="common">Kluyveromyces polysporus</name>
    <dbReference type="NCBI Taxonomy" id="436907"/>
    <lineage>
        <taxon>Eukaryota</taxon>
        <taxon>Fungi</taxon>
        <taxon>Dikarya</taxon>
        <taxon>Ascomycota</taxon>
        <taxon>Saccharomycotina</taxon>
        <taxon>Saccharomycetes</taxon>
        <taxon>Saccharomycetales</taxon>
        <taxon>Saccharomycetaceae</taxon>
        <taxon>Vanderwaltozyma</taxon>
    </lineage>
</organism>
<reference key="1">
    <citation type="journal article" date="2007" name="Proc. Natl. Acad. Sci. U.S.A.">
        <title>Independent sorting-out of thousands of duplicated gene pairs in two yeast species descended from a whole-genome duplication.</title>
        <authorList>
            <person name="Scannell D.R."/>
            <person name="Frank A.C."/>
            <person name="Conant G.C."/>
            <person name="Byrne K.P."/>
            <person name="Woolfit M."/>
            <person name="Wolfe K.H."/>
        </authorList>
    </citation>
    <scope>NUCLEOTIDE SEQUENCE [LARGE SCALE GENOMIC DNA]</scope>
    <source>
        <strain>ATCC 22028 / DSM 70294 / BCRC 21397 / CBS 2163 / NBRC 10782 / NRRL Y-8283 / UCD 57-17</strain>
    </source>
</reference>
<sequence>MRPIMLVGHERPLTQVKYNKEGDLVFSCSKDSVASVWYSINGERLGTLEGHTGTIWSIDVDPFTESCVTGSADYSIKVWKVQTGTVIHTWTAPVPIKRVEFSPCGDYILAVLDDVMRYPGSINVYKVSRDPVTKEIKEFVEEPILVINTQENHKGVTVAGWSAEGKYIIACHKDGKVSKYNAKTGEFITSIELHTQTIGDIQFSPDRTYFITSSRDSMAYILDVESMEQLKSYEADCPLNSACITPLKEFVILGGGQAARDVTTTSAREGKFEARFYHKIFEDEIGRVKGHFGPLNYVAVNPQGTSYTSGGEDGFARIHHFEKSYFDFKYDVEKAAEAKEHMQTASA</sequence>
<evidence type="ECO:0000255" key="1">
    <source>
        <dbReference type="HAMAP-Rule" id="MF_03008"/>
    </source>
</evidence>
<dbReference type="EMBL" id="DS480389">
    <property type="protein sequence ID" value="EDO18471.1"/>
    <property type="molecule type" value="Genomic_DNA"/>
</dbReference>
<dbReference type="RefSeq" id="XP_001646329.1">
    <property type="nucleotide sequence ID" value="XM_001646279.1"/>
</dbReference>
<dbReference type="SMR" id="A7TH19"/>
<dbReference type="FunCoup" id="A7TH19">
    <property type="interactions" value="1188"/>
</dbReference>
<dbReference type="STRING" id="436907.A7TH19"/>
<dbReference type="GeneID" id="5546758"/>
<dbReference type="KEGG" id="vpo:Kpol_1032p65"/>
<dbReference type="eggNOG" id="KOG0643">
    <property type="taxonomic scope" value="Eukaryota"/>
</dbReference>
<dbReference type="HOGENOM" id="CLU_043845_0_1_1"/>
<dbReference type="InParanoid" id="A7TH19"/>
<dbReference type="OMA" id="VWFSHNG"/>
<dbReference type="OrthoDB" id="24966at2759"/>
<dbReference type="Proteomes" id="UP000000267">
    <property type="component" value="Unassembled WGS sequence"/>
</dbReference>
<dbReference type="GO" id="GO:0016282">
    <property type="term" value="C:eukaryotic 43S preinitiation complex"/>
    <property type="evidence" value="ECO:0007669"/>
    <property type="project" value="UniProtKB-UniRule"/>
</dbReference>
<dbReference type="GO" id="GO:0033290">
    <property type="term" value="C:eukaryotic 48S preinitiation complex"/>
    <property type="evidence" value="ECO:0007669"/>
    <property type="project" value="UniProtKB-UniRule"/>
</dbReference>
<dbReference type="GO" id="GO:0071540">
    <property type="term" value="C:eukaryotic translation initiation factor 3 complex, eIF3e"/>
    <property type="evidence" value="ECO:0007669"/>
    <property type="project" value="EnsemblFungi"/>
</dbReference>
<dbReference type="GO" id="GO:0071541">
    <property type="term" value="C:eukaryotic translation initiation factor 3 complex, eIF3m"/>
    <property type="evidence" value="ECO:0007669"/>
    <property type="project" value="EnsemblFungi"/>
</dbReference>
<dbReference type="GO" id="GO:0034399">
    <property type="term" value="C:nuclear periphery"/>
    <property type="evidence" value="ECO:0007669"/>
    <property type="project" value="EnsemblFungi"/>
</dbReference>
<dbReference type="GO" id="GO:0003723">
    <property type="term" value="F:RNA binding"/>
    <property type="evidence" value="ECO:0007669"/>
    <property type="project" value="TreeGrafter"/>
</dbReference>
<dbReference type="GO" id="GO:0003743">
    <property type="term" value="F:translation initiation factor activity"/>
    <property type="evidence" value="ECO:0007669"/>
    <property type="project" value="UniProtKB-UniRule"/>
</dbReference>
<dbReference type="GO" id="GO:0001732">
    <property type="term" value="P:formation of cytoplasmic translation initiation complex"/>
    <property type="evidence" value="ECO:0007669"/>
    <property type="project" value="UniProtKB-UniRule"/>
</dbReference>
<dbReference type="FunFam" id="2.130.10.10:FF:000127">
    <property type="entry name" value="Eukaryotic translation initiation factor 3 subunit I"/>
    <property type="match status" value="1"/>
</dbReference>
<dbReference type="Gene3D" id="2.130.10.10">
    <property type="entry name" value="YVTN repeat-like/Quinoprotein amine dehydrogenase"/>
    <property type="match status" value="1"/>
</dbReference>
<dbReference type="HAMAP" id="MF_03008">
    <property type="entry name" value="eIF3i"/>
    <property type="match status" value="1"/>
</dbReference>
<dbReference type="InterPro" id="IPR027525">
    <property type="entry name" value="eIF3i"/>
</dbReference>
<dbReference type="InterPro" id="IPR015943">
    <property type="entry name" value="WD40/YVTN_repeat-like_dom_sf"/>
</dbReference>
<dbReference type="InterPro" id="IPR036322">
    <property type="entry name" value="WD40_repeat_dom_sf"/>
</dbReference>
<dbReference type="InterPro" id="IPR001680">
    <property type="entry name" value="WD40_rpt"/>
</dbReference>
<dbReference type="PANTHER" id="PTHR19877">
    <property type="entry name" value="EUKARYOTIC TRANSLATION INITIATION FACTOR 3 SUBUNIT I"/>
    <property type="match status" value="1"/>
</dbReference>
<dbReference type="PANTHER" id="PTHR19877:SF1">
    <property type="entry name" value="EUKARYOTIC TRANSLATION INITIATION FACTOR 3 SUBUNIT I"/>
    <property type="match status" value="1"/>
</dbReference>
<dbReference type="Pfam" id="PF24805">
    <property type="entry name" value="EIF3I"/>
    <property type="match status" value="1"/>
</dbReference>
<dbReference type="SMART" id="SM00320">
    <property type="entry name" value="WD40"/>
    <property type="match status" value="6"/>
</dbReference>
<dbReference type="SUPFAM" id="SSF50978">
    <property type="entry name" value="WD40 repeat-like"/>
    <property type="match status" value="1"/>
</dbReference>
<dbReference type="PROSITE" id="PS50082">
    <property type="entry name" value="WD_REPEATS_2"/>
    <property type="match status" value="3"/>
</dbReference>
<dbReference type="PROSITE" id="PS50294">
    <property type="entry name" value="WD_REPEATS_REGION"/>
    <property type="match status" value="1"/>
</dbReference>
<gene>
    <name evidence="1" type="primary">TIF34</name>
    <name type="ORF">Kpol_1032p65</name>
</gene>
<protein>
    <recommendedName>
        <fullName evidence="1">Eukaryotic translation initiation factor 3 subunit I</fullName>
        <shortName evidence="1">eIF3i</shortName>
    </recommendedName>
    <alternativeName>
        <fullName evidence="1">Eukaryotic translation initiation factor 3 39 kDa subunit homolog</fullName>
        <shortName evidence="1">eIF-3 39 kDa subunit homolog</shortName>
    </alternativeName>
</protein>
<keyword id="KW-0963">Cytoplasm</keyword>
<keyword id="KW-0396">Initiation factor</keyword>
<keyword id="KW-0648">Protein biosynthesis</keyword>
<keyword id="KW-1185">Reference proteome</keyword>
<keyword id="KW-0677">Repeat</keyword>
<keyword id="KW-0853">WD repeat</keyword>
<accession>A7TH19</accession>
<name>EIF3I_VANPO</name>
<comment type="function">
    <text evidence="1">Component of the eukaryotic translation initiation factor 3 (eIF-3) complex, which is involved in protein synthesis of a specialized repertoire of mRNAs and, together with other initiation factors, stimulates binding of mRNA and methionyl-tRNAi to the 40S ribosome. The eIF-3 complex specifically targets and initiates translation of a subset of mRNAs involved in cell proliferation.</text>
</comment>
<comment type="subunit">
    <text evidence="1">Component of the eukaryotic translation initiation factor 3 (eIF-3) complex.</text>
</comment>
<comment type="subcellular location">
    <subcellularLocation>
        <location evidence="1">Cytoplasm</location>
    </subcellularLocation>
</comment>
<comment type="similarity">
    <text evidence="1">Belongs to the eIF-3 subunit I family.</text>
</comment>
<proteinExistence type="inferred from homology"/>
<feature type="chain" id="PRO_0000365374" description="Eukaryotic translation initiation factor 3 subunit I">
    <location>
        <begin position="1"/>
        <end position="347"/>
    </location>
</feature>
<feature type="repeat" description="WD 1">
    <location>
        <begin position="8"/>
        <end position="47"/>
    </location>
</feature>
<feature type="repeat" description="WD 2">
    <location>
        <begin position="50"/>
        <end position="89"/>
    </location>
</feature>
<feature type="repeat" description="WD 3">
    <location>
        <begin position="91"/>
        <end position="135"/>
    </location>
</feature>
<feature type="repeat" description="WD 4">
    <location>
        <begin position="151"/>
        <end position="190"/>
    </location>
</feature>
<feature type="repeat" description="WD 5">
    <location>
        <begin position="193"/>
        <end position="232"/>
    </location>
</feature>
<feature type="repeat" description="WD 6">
    <location>
        <begin position="290"/>
        <end position="329"/>
    </location>
</feature>